<protein>
    <recommendedName>
        <fullName evidence="7">Contryphan-Fia</fullName>
    </recommendedName>
    <alternativeName>
        <fullName evidence="9">Fi1187</fullName>
    </alternativeName>
</protein>
<organism>
    <name type="scientific">Conus figulinus</name>
    <name type="common">Fig cone</name>
    <dbReference type="NCBI Taxonomy" id="101301"/>
    <lineage>
        <taxon>Eukaryota</taxon>
        <taxon>Metazoa</taxon>
        <taxon>Spiralia</taxon>
        <taxon>Lophotrochozoa</taxon>
        <taxon>Mollusca</taxon>
        <taxon>Gastropoda</taxon>
        <taxon>Caenogastropoda</taxon>
        <taxon>Neogastropoda</taxon>
        <taxon>Conoidea</taxon>
        <taxon>Conidae</taxon>
        <taxon>Conus</taxon>
        <taxon>Dendroconus</taxon>
    </lineage>
</organism>
<proteinExistence type="evidence at protein level"/>
<keyword id="KW-0027">Amidation</keyword>
<keyword id="KW-0208">D-amino acid</keyword>
<keyword id="KW-0903">Direct protein sequencing</keyword>
<keyword id="KW-1015">Disulfide bond</keyword>
<keyword id="KW-0379">Hydroxylation</keyword>
<keyword id="KW-0872">Ion channel impairing toxin</keyword>
<keyword id="KW-0528">Neurotoxin</keyword>
<keyword id="KW-0964">Secreted</keyword>
<keyword id="KW-0800">Toxin</keyword>
<comment type="function">
    <text evidence="1 2 4 5">Its target is unknown, but this toxin may modulate voltage-activated calcium channels (Cav) or calcium-dependent potassium channels (KCa).</text>
</comment>
<comment type="subcellular location">
    <subcellularLocation>
        <location evidence="6">Secreted</location>
    </subcellularLocation>
</comment>
<comment type="tissue specificity">
    <text evidence="9">Expressed by the venom duct.</text>
</comment>
<comment type="domain">
    <text evidence="8">The cysteine framework is C-C.</text>
</comment>
<comment type="mass spectrometry"/>
<comment type="miscellaneous">
    <text evidence="3">Exists in two forms, due to cis-trans isomerization at 4-Cys-hydroxyPro-5. The cis conformation is the major form.</text>
</comment>
<comment type="similarity">
    <text evidence="8">Belongs to the O2 superfamily. Contryphan family.</text>
</comment>
<reference key="1">
    <citation type="journal article" date="2007" name="Rapid Commun. Mass Spectrom.">
        <title>Rapid mass spectral identification of contryphans. Detection of characteristic peptide ions by fragmentation of intact disulfide-bonded peptides in crude venom.</title>
        <authorList>
            <person name="Thakur S.S."/>
            <person name="Balaram P."/>
        </authorList>
    </citation>
    <scope>PROTEIN SEQUENCE</scope>
    <scope>IDENTIFICATION BY MASS SPECTROMETRY</scope>
    <scope>MASS SPECTROMETRY</scope>
    <scope>SUBCELLULAR LOCATION</scope>
    <scope>HYDROXYLATION AT PRO-5</scope>
    <scope>D-AMINO ACID AT TRP-6</scope>
    <scope>AMIDATION AT CYS-10</scope>
    <source>
        <tissue>Venom</tissue>
    </source>
</reference>
<reference key="2">
    <citation type="journal article" date="2015" name="J. Pept. Sci.">
        <title>Novel M-Superfamily and T-Superfamily conotoxins and contryphans from the vermivorous snail Conus figulinus.</title>
        <authorList>
            <person name="Rajesh R.P."/>
        </authorList>
    </citation>
    <scope>NOMENCLATURE</scope>
    <source>
        <tissue>Venom</tissue>
    </source>
</reference>
<dbReference type="GO" id="GO:0005576">
    <property type="term" value="C:extracellular region"/>
    <property type="evidence" value="ECO:0007669"/>
    <property type="project" value="UniProtKB-SubCell"/>
</dbReference>
<dbReference type="GO" id="GO:0099106">
    <property type="term" value="F:ion channel regulator activity"/>
    <property type="evidence" value="ECO:0007669"/>
    <property type="project" value="UniProtKB-KW"/>
</dbReference>
<dbReference type="GO" id="GO:0090729">
    <property type="term" value="F:toxin activity"/>
    <property type="evidence" value="ECO:0007669"/>
    <property type="project" value="UniProtKB-KW"/>
</dbReference>
<dbReference type="InterPro" id="IPR011062">
    <property type="entry name" value="Contryphan_CS"/>
</dbReference>
<dbReference type="PROSITE" id="PS60027">
    <property type="entry name" value="CONTRYPHAN"/>
    <property type="match status" value="1"/>
</dbReference>
<sequence>VVGCPWQPWC</sequence>
<name>COWA_CONFI</name>
<feature type="peptide" id="PRO_0000439691" description="Contryphan-Fia" evidence="6">
    <location>
        <begin position="1"/>
        <end position="10"/>
    </location>
</feature>
<feature type="modified residue" description="4-hydroxyproline" evidence="6">
    <location>
        <position position="5"/>
    </location>
</feature>
<feature type="modified residue" description="D-tryptophan" evidence="6">
    <location>
        <position position="6"/>
    </location>
</feature>
<feature type="modified residue" description="Cysteine amide" evidence="6">
    <location>
        <position position="10"/>
    </location>
</feature>
<feature type="disulfide bond" evidence="6">
    <location>
        <begin position="4"/>
        <end position="10"/>
    </location>
</feature>
<accession>P0DP20</accession>
<evidence type="ECO:0000250" key="1">
    <source>
        <dbReference type="UniProtKB" id="P0C248"/>
    </source>
</evidence>
<evidence type="ECO:0000250" key="2">
    <source>
        <dbReference type="UniProtKB" id="P0C250"/>
    </source>
</evidence>
<evidence type="ECO:0000250" key="3">
    <source>
        <dbReference type="UniProtKB" id="P58787"/>
    </source>
</evidence>
<evidence type="ECO:0000250" key="4">
    <source>
        <dbReference type="UniProtKB" id="P62903"/>
    </source>
</evidence>
<evidence type="ECO:0000250" key="5">
    <source>
        <dbReference type="UniProtKB" id="P83047"/>
    </source>
</evidence>
<evidence type="ECO:0000269" key="6">
    <source>
    </source>
</evidence>
<evidence type="ECO:0000303" key="7">
    <source>
    </source>
</evidence>
<evidence type="ECO:0000305" key="8"/>
<evidence type="ECO:0000305" key="9">
    <source>
    </source>
</evidence>